<name>FABZ_BURO0</name>
<evidence type="ECO:0000255" key="1">
    <source>
        <dbReference type="HAMAP-Rule" id="MF_00406"/>
    </source>
</evidence>
<reference key="1">
    <citation type="submission" date="2008-02" db="EMBL/GenBank/DDBJ databases">
        <title>Complete sequence of chromosome 1 of Burkholderia cenocepacia MC0-3.</title>
        <authorList>
            <person name="Copeland A."/>
            <person name="Lucas S."/>
            <person name="Lapidus A."/>
            <person name="Barry K."/>
            <person name="Bruce D."/>
            <person name="Goodwin L."/>
            <person name="Glavina del Rio T."/>
            <person name="Dalin E."/>
            <person name="Tice H."/>
            <person name="Pitluck S."/>
            <person name="Chain P."/>
            <person name="Malfatti S."/>
            <person name="Shin M."/>
            <person name="Vergez L."/>
            <person name="Schmutz J."/>
            <person name="Larimer F."/>
            <person name="Land M."/>
            <person name="Hauser L."/>
            <person name="Kyrpides N."/>
            <person name="Mikhailova N."/>
            <person name="Tiedje J."/>
            <person name="Richardson P."/>
        </authorList>
    </citation>
    <scope>NUCLEOTIDE SEQUENCE [LARGE SCALE GENOMIC DNA]</scope>
    <source>
        <strain>MC0-3</strain>
    </source>
</reference>
<gene>
    <name evidence="1" type="primary">fabZ</name>
    <name type="ordered locus">Bcenmc03_2028</name>
</gene>
<proteinExistence type="inferred from homology"/>
<sequence length="155" mass="17392">MSTEKINLDIHKILTLLPHRYPILLVDRVLELEPHKGIKALKNVSINEPFFQGHFPKRPVMPGVLILEALAQAAALLTFAEEQPKDPENTLYYFVGIDGARFKRVVEPGDQLILNVTFERYIRGIWKFKAVAEVDGKVAAEAELMCTVKTADAAP</sequence>
<protein>
    <recommendedName>
        <fullName evidence="1">3-hydroxyacyl-[acyl-carrier-protein] dehydratase FabZ</fullName>
        <ecNumber evidence="1">4.2.1.59</ecNumber>
    </recommendedName>
    <alternativeName>
        <fullName evidence="1">(3R)-hydroxymyristoyl-[acyl-carrier-protein] dehydratase</fullName>
        <shortName evidence="1">(3R)-hydroxymyristoyl-ACP dehydrase</shortName>
    </alternativeName>
    <alternativeName>
        <fullName evidence="1">Beta-hydroxyacyl-ACP dehydratase</fullName>
    </alternativeName>
</protein>
<feature type="chain" id="PRO_1000197282" description="3-hydroxyacyl-[acyl-carrier-protein] dehydratase FabZ">
    <location>
        <begin position="1"/>
        <end position="155"/>
    </location>
</feature>
<feature type="active site" evidence="1">
    <location>
        <position position="54"/>
    </location>
</feature>
<keyword id="KW-0963">Cytoplasm</keyword>
<keyword id="KW-0441">Lipid A biosynthesis</keyword>
<keyword id="KW-0444">Lipid biosynthesis</keyword>
<keyword id="KW-0443">Lipid metabolism</keyword>
<keyword id="KW-0456">Lyase</keyword>
<accession>B1JUD9</accession>
<organism>
    <name type="scientific">Burkholderia orbicola (strain MC0-3)</name>
    <dbReference type="NCBI Taxonomy" id="406425"/>
    <lineage>
        <taxon>Bacteria</taxon>
        <taxon>Pseudomonadati</taxon>
        <taxon>Pseudomonadota</taxon>
        <taxon>Betaproteobacteria</taxon>
        <taxon>Burkholderiales</taxon>
        <taxon>Burkholderiaceae</taxon>
        <taxon>Burkholderia</taxon>
        <taxon>Burkholderia cepacia complex</taxon>
        <taxon>Burkholderia orbicola</taxon>
    </lineage>
</organism>
<comment type="function">
    <text evidence="1">Involved in unsaturated fatty acids biosynthesis. Catalyzes the dehydration of short chain beta-hydroxyacyl-ACPs and long chain saturated and unsaturated beta-hydroxyacyl-ACPs.</text>
</comment>
<comment type="catalytic activity">
    <reaction evidence="1">
        <text>a (3R)-hydroxyacyl-[ACP] = a (2E)-enoyl-[ACP] + H2O</text>
        <dbReference type="Rhea" id="RHEA:13097"/>
        <dbReference type="Rhea" id="RHEA-COMP:9925"/>
        <dbReference type="Rhea" id="RHEA-COMP:9945"/>
        <dbReference type="ChEBI" id="CHEBI:15377"/>
        <dbReference type="ChEBI" id="CHEBI:78784"/>
        <dbReference type="ChEBI" id="CHEBI:78827"/>
        <dbReference type="EC" id="4.2.1.59"/>
    </reaction>
</comment>
<comment type="subcellular location">
    <subcellularLocation>
        <location evidence="1">Cytoplasm</location>
    </subcellularLocation>
</comment>
<comment type="similarity">
    <text evidence="1">Belongs to the thioester dehydratase family. FabZ subfamily.</text>
</comment>
<dbReference type="EC" id="4.2.1.59" evidence="1"/>
<dbReference type="EMBL" id="CP000958">
    <property type="protein sequence ID" value="ACA91189.1"/>
    <property type="molecule type" value="Genomic_DNA"/>
</dbReference>
<dbReference type="RefSeq" id="WP_006495559.1">
    <property type="nucleotide sequence ID" value="NC_010508.1"/>
</dbReference>
<dbReference type="SMR" id="B1JUD9"/>
<dbReference type="GeneID" id="98105474"/>
<dbReference type="KEGG" id="bcm:Bcenmc03_2028"/>
<dbReference type="HOGENOM" id="CLU_078912_1_0_4"/>
<dbReference type="Proteomes" id="UP000002169">
    <property type="component" value="Chromosome 1"/>
</dbReference>
<dbReference type="GO" id="GO:0005737">
    <property type="term" value="C:cytoplasm"/>
    <property type="evidence" value="ECO:0007669"/>
    <property type="project" value="UniProtKB-SubCell"/>
</dbReference>
<dbReference type="GO" id="GO:0016020">
    <property type="term" value="C:membrane"/>
    <property type="evidence" value="ECO:0007669"/>
    <property type="project" value="GOC"/>
</dbReference>
<dbReference type="GO" id="GO:0019171">
    <property type="term" value="F:(3R)-hydroxyacyl-[acyl-carrier-protein] dehydratase activity"/>
    <property type="evidence" value="ECO:0007669"/>
    <property type="project" value="UniProtKB-EC"/>
</dbReference>
<dbReference type="GO" id="GO:0006633">
    <property type="term" value="P:fatty acid biosynthetic process"/>
    <property type="evidence" value="ECO:0007669"/>
    <property type="project" value="UniProtKB-UniRule"/>
</dbReference>
<dbReference type="GO" id="GO:0009245">
    <property type="term" value="P:lipid A biosynthetic process"/>
    <property type="evidence" value="ECO:0007669"/>
    <property type="project" value="UniProtKB-UniRule"/>
</dbReference>
<dbReference type="CDD" id="cd01288">
    <property type="entry name" value="FabZ"/>
    <property type="match status" value="1"/>
</dbReference>
<dbReference type="FunFam" id="3.10.129.10:FF:000001">
    <property type="entry name" value="3-hydroxyacyl-[acyl-carrier-protein] dehydratase FabZ"/>
    <property type="match status" value="1"/>
</dbReference>
<dbReference type="Gene3D" id="3.10.129.10">
    <property type="entry name" value="Hotdog Thioesterase"/>
    <property type="match status" value="1"/>
</dbReference>
<dbReference type="HAMAP" id="MF_00406">
    <property type="entry name" value="FabZ"/>
    <property type="match status" value="1"/>
</dbReference>
<dbReference type="InterPro" id="IPR013114">
    <property type="entry name" value="FabA_FabZ"/>
</dbReference>
<dbReference type="InterPro" id="IPR010084">
    <property type="entry name" value="FabZ"/>
</dbReference>
<dbReference type="InterPro" id="IPR029069">
    <property type="entry name" value="HotDog_dom_sf"/>
</dbReference>
<dbReference type="NCBIfam" id="TIGR01750">
    <property type="entry name" value="fabZ"/>
    <property type="match status" value="1"/>
</dbReference>
<dbReference type="NCBIfam" id="NF000582">
    <property type="entry name" value="PRK00006.1"/>
    <property type="match status" value="1"/>
</dbReference>
<dbReference type="PANTHER" id="PTHR30272">
    <property type="entry name" value="3-HYDROXYACYL-[ACYL-CARRIER-PROTEIN] DEHYDRATASE"/>
    <property type="match status" value="1"/>
</dbReference>
<dbReference type="PANTHER" id="PTHR30272:SF1">
    <property type="entry name" value="3-HYDROXYACYL-[ACYL-CARRIER-PROTEIN] DEHYDRATASE"/>
    <property type="match status" value="1"/>
</dbReference>
<dbReference type="Pfam" id="PF07977">
    <property type="entry name" value="FabA"/>
    <property type="match status" value="1"/>
</dbReference>
<dbReference type="SUPFAM" id="SSF54637">
    <property type="entry name" value="Thioesterase/thiol ester dehydrase-isomerase"/>
    <property type="match status" value="1"/>
</dbReference>